<organism>
    <name type="scientific">Serratia proteamaculans (strain 568)</name>
    <dbReference type="NCBI Taxonomy" id="399741"/>
    <lineage>
        <taxon>Bacteria</taxon>
        <taxon>Pseudomonadati</taxon>
        <taxon>Pseudomonadota</taxon>
        <taxon>Gammaproteobacteria</taxon>
        <taxon>Enterobacterales</taxon>
        <taxon>Yersiniaceae</taxon>
        <taxon>Serratia</taxon>
    </lineage>
</organism>
<protein>
    <recommendedName>
        <fullName evidence="1">Alkanesulfonate monooxygenase</fullName>
        <ecNumber evidence="1">1.14.14.5</ecNumber>
    </recommendedName>
    <alternativeName>
        <fullName evidence="1">FMNH2-dependent aliphatic sulfonate monooxygenase</fullName>
    </alternativeName>
</protein>
<dbReference type="EC" id="1.14.14.5" evidence="1"/>
<dbReference type="EMBL" id="CP000826">
    <property type="protein sequence ID" value="ABV40841.1"/>
    <property type="molecule type" value="Genomic_DNA"/>
</dbReference>
<dbReference type="SMR" id="A8GCK1"/>
<dbReference type="STRING" id="399741.Spro_1737"/>
<dbReference type="KEGG" id="spe:Spro_1737"/>
<dbReference type="eggNOG" id="COG2141">
    <property type="taxonomic scope" value="Bacteria"/>
</dbReference>
<dbReference type="HOGENOM" id="CLU_027853_1_0_6"/>
<dbReference type="OrthoDB" id="9814695at2"/>
<dbReference type="GO" id="GO:0008726">
    <property type="term" value="F:alkanesulfonate monooxygenase activity"/>
    <property type="evidence" value="ECO:0007669"/>
    <property type="project" value="UniProtKB-UniRule"/>
</dbReference>
<dbReference type="GO" id="GO:0046306">
    <property type="term" value="P:alkanesulfonate catabolic process"/>
    <property type="evidence" value="ECO:0007669"/>
    <property type="project" value="TreeGrafter"/>
</dbReference>
<dbReference type="CDD" id="cd01094">
    <property type="entry name" value="Alkanesulfonate_monoxygenase"/>
    <property type="match status" value="1"/>
</dbReference>
<dbReference type="FunFam" id="3.20.20.30:FF:000001">
    <property type="entry name" value="Alkanesulfonate monooxygenase"/>
    <property type="match status" value="1"/>
</dbReference>
<dbReference type="Gene3D" id="3.20.20.30">
    <property type="entry name" value="Luciferase-like domain"/>
    <property type="match status" value="1"/>
</dbReference>
<dbReference type="HAMAP" id="MF_01229">
    <property type="entry name" value="Alkanesulf_monooxygen"/>
    <property type="match status" value="1"/>
</dbReference>
<dbReference type="InterPro" id="IPR019911">
    <property type="entry name" value="Alkanesulphonate_mOase_FMN-dep"/>
</dbReference>
<dbReference type="InterPro" id="IPR011251">
    <property type="entry name" value="Luciferase-like_dom"/>
</dbReference>
<dbReference type="InterPro" id="IPR036661">
    <property type="entry name" value="Luciferase-like_sf"/>
</dbReference>
<dbReference type="InterPro" id="IPR050172">
    <property type="entry name" value="SsuD_RutA_monooxygenase"/>
</dbReference>
<dbReference type="NCBIfam" id="TIGR03565">
    <property type="entry name" value="alk_sulf_monoox"/>
    <property type="match status" value="1"/>
</dbReference>
<dbReference type="NCBIfam" id="NF001939">
    <property type="entry name" value="PRK00719.1"/>
    <property type="match status" value="1"/>
</dbReference>
<dbReference type="PANTHER" id="PTHR42847">
    <property type="entry name" value="ALKANESULFONATE MONOOXYGENASE"/>
    <property type="match status" value="1"/>
</dbReference>
<dbReference type="PANTHER" id="PTHR42847:SF4">
    <property type="entry name" value="ALKANESULFONATE MONOOXYGENASE-RELATED"/>
    <property type="match status" value="1"/>
</dbReference>
<dbReference type="Pfam" id="PF00296">
    <property type="entry name" value="Bac_luciferase"/>
    <property type="match status" value="1"/>
</dbReference>
<dbReference type="SUPFAM" id="SSF51679">
    <property type="entry name" value="Bacterial luciferase-like"/>
    <property type="match status" value="1"/>
</dbReference>
<name>SSUD_SERP5</name>
<proteinExistence type="inferred from homology"/>
<reference key="1">
    <citation type="submission" date="2007-09" db="EMBL/GenBank/DDBJ databases">
        <title>Complete sequence of chromosome of Serratia proteamaculans 568.</title>
        <authorList>
            <consortium name="US DOE Joint Genome Institute"/>
            <person name="Copeland A."/>
            <person name="Lucas S."/>
            <person name="Lapidus A."/>
            <person name="Barry K."/>
            <person name="Glavina del Rio T."/>
            <person name="Dalin E."/>
            <person name="Tice H."/>
            <person name="Pitluck S."/>
            <person name="Chain P."/>
            <person name="Malfatti S."/>
            <person name="Shin M."/>
            <person name="Vergez L."/>
            <person name="Schmutz J."/>
            <person name="Larimer F."/>
            <person name="Land M."/>
            <person name="Hauser L."/>
            <person name="Kyrpides N."/>
            <person name="Kim E."/>
            <person name="Taghavi S."/>
            <person name="Newman L."/>
            <person name="Vangronsveld J."/>
            <person name="van der Lelie D."/>
            <person name="Richardson P."/>
        </authorList>
    </citation>
    <scope>NUCLEOTIDE SEQUENCE [LARGE SCALE GENOMIC DNA]</scope>
    <source>
        <strain>568</strain>
    </source>
</reference>
<sequence length="382" mass="41545">MSLNVFWFLPTHGDGHYLGSTEGARSVDYGYLQQIAQAADRLGFGGVLIPTGRSCEDSWLVAASLIPVTQRLKFLVALRPGIISPTLAARQAATLDRLSNGRALFNLVTGGDPDELAAEGLHLNHEERYEASAEFTHIWRKVLEGETVDFNGKHIQVKGAKLLYPPVQQPRPPLYFGGSSAAAQDLAADQVEMYLTWGEPPAQVKEKIAEVRAKAAAKGRQVRFGIRLHVIVRETTEEAWRAADRLIANLDEKTIADAQQAFARFDSVGQQRMAALHGGKKDNLEISPNLWAGVGLVRGGAGTALVGDGPTVAARMQEYADLGIDTFILSGYPHLEEAYRVGELLFPHLDLVENQAPAPRRPAKAQGEVVANIYIPQKASQS</sequence>
<gene>
    <name evidence="1" type="primary">ssuD</name>
    <name type="ordered locus">Spro_1737</name>
</gene>
<keyword id="KW-0285">Flavoprotein</keyword>
<keyword id="KW-0288">FMN</keyword>
<keyword id="KW-0503">Monooxygenase</keyword>
<keyword id="KW-0560">Oxidoreductase</keyword>
<accession>A8GCK1</accession>
<comment type="function">
    <text evidence="1">Catalyzes the desulfonation of aliphatic sulfonates.</text>
</comment>
<comment type="catalytic activity">
    <reaction evidence="1">
        <text>an alkanesulfonate + FMNH2 + O2 = an aldehyde + FMN + sulfite + H2O + 2 H(+)</text>
        <dbReference type="Rhea" id="RHEA:23064"/>
        <dbReference type="ChEBI" id="CHEBI:15377"/>
        <dbReference type="ChEBI" id="CHEBI:15378"/>
        <dbReference type="ChEBI" id="CHEBI:15379"/>
        <dbReference type="ChEBI" id="CHEBI:17359"/>
        <dbReference type="ChEBI" id="CHEBI:17478"/>
        <dbReference type="ChEBI" id="CHEBI:57618"/>
        <dbReference type="ChEBI" id="CHEBI:58210"/>
        <dbReference type="ChEBI" id="CHEBI:134249"/>
        <dbReference type="EC" id="1.14.14.5"/>
    </reaction>
</comment>
<comment type="subunit">
    <text evidence="1">Homotetramer.</text>
</comment>
<comment type="miscellaneous">
    <text evidence="1">FMNH(2) which is absolutely required for this enzymatic reaction, is provided by SsuE.</text>
</comment>
<comment type="similarity">
    <text evidence="1">Belongs to the SsuD family.</text>
</comment>
<feature type="chain" id="PRO_1000066835" description="Alkanesulfonate monooxygenase">
    <location>
        <begin position="1"/>
        <end position="382"/>
    </location>
</feature>
<evidence type="ECO:0000255" key="1">
    <source>
        <dbReference type="HAMAP-Rule" id="MF_01229"/>
    </source>
</evidence>